<evidence type="ECO:0000250" key="1">
    <source>
        <dbReference type="UniProtKB" id="Q9BSY9"/>
    </source>
</evidence>
<evidence type="ECO:0000250" key="2">
    <source>
        <dbReference type="UniProtKB" id="Q9D291"/>
    </source>
</evidence>
<evidence type="ECO:0000255" key="3">
    <source>
        <dbReference type="PROSITE-ProRule" id="PRU01205"/>
    </source>
</evidence>
<evidence type="ECO:0000256" key="4">
    <source>
        <dbReference type="SAM" id="MobiDB-lite"/>
    </source>
</evidence>
<evidence type="ECO:0000305" key="5"/>
<feature type="chain" id="PRO_0000317726" description="Deubiquitinase DESI2">
    <location>
        <begin position="1"/>
        <end position="193"/>
    </location>
</feature>
<feature type="domain" description="PPPDE" evidence="3">
    <location>
        <begin position="4"/>
        <end position="148"/>
    </location>
</feature>
<feature type="region of interest" description="Disordered" evidence="4">
    <location>
        <begin position="165"/>
        <end position="193"/>
    </location>
</feature>
<feature type="compositionally biased region" description="Low complexity" evidence="4">
    <location>
        <begin position="172"/>
        <end position="183"/>
    </location>
</feature>
<feature type="active site" evidence="3">
    <location>
        <position position="29"/>
    </location>
</feature>
<feature type="active site" evidence="1 3">
    <location>
        <position position="107"/>
    </location>
</feature>
<comment type="function">
    <text evidence="1">Has deubiquitinating activity towards 'Lys-48'- and 'Lys-63'-linked polyubiquitin chains. Exhibits palmitoyl protein thioesterase (S-depalmitoylation) activity towards synthetic substrates 4-methylumbelliferyl-6-S-palmitoyl-beta-D-glucopyranoside and S-depalmitoylation probe 5 (DPP-5).</text>
</comment>
<comment type="catalytic activity">
    <reaction evidence="1">
        <text>Thiol-dependent hydrolysis of ester, thioester, amide, peptide and isopeptide bonds formed by the C-terminal Gly of ubiquitin (a 76-residue protein attached to proteins as an intracellular targeting signal).</text>
        <dbReference type="EC" id="3.4.19.12"/>
    </reaction>
</comment>
<comment type="catalytic activity">
    <reaction evidence="1">
        <text>S-hexadecanoyl-L-cysteinyl-[protein] + H2O = L-cysteinyl-[protein] + hexadecanoate + H(+)</text>
        <dbReference type="Rhea" id="RHEA:19233"/>
        <dbReference type="Rhea" id="RHEA-COMP:10131"/>
        <dbReference type="Rhea" id="RHEA-COMP:11032"/>
        <dbReference type="ChEBI" id="CHEBI:7896"/>
        <dbReference type="ChEBI" id="CHEBI:15377"/>
        <dbReference type="ChEBI" id="CHEBI:15378"/>
        <dbReference type="ChEBI" id="CHEBI:29950"/>
        <dbReference type="ChEBI" id="CHEBI:74151"/>
        <dbReference type="EC" id="3.1.2.22"/>
    </reaction>
    <physiologicalReaction direction="left-to-right" evidence="1">
        <dbReference type="Rhea" id="RHEA:19234"/>
    </physiologicalReaction>
</comment>
<comment type="subcellular location">
    <subcellularLocation>
        <location evidence="2">Cytoplasm</location>
    </subcellularLocation>
</comment>
<comment type="similarity">
    <text evidence="5">Belongs to the DeSI family.</text>
</comment>
<accession>Q5ZIV7</accession>
<dbReference type="EC" id="3.4.19.12" evidence="1"/>
<dbReference type="EC" id="3.1.2.22" evidence="1"/>
<dbReference type="EMBL" id="AJ720677">
    <property type="protein sequence ID" value="CAG32336.1"/>
    <property type="molecule type" value="mRNA"/>
</dbReference>
<dbReference type="RefSeq" id="NP_001008460.1">
    <property type="nucleotide sequence ID" value="NM_001008460.3"/>
</dbReference>
<dbReference type="SMR" id="Q5ZIV7"/>
<dbReference type="FunCoup" id="Q5ZIV7">
    <property type="interactions" value="2242"/>
</dbReference>
<dbReference type="STRING" id="9031.ENSGALP00000017350"/>
<dbReference type="MEROPS" id="C97.002"/>
<dbReference type="PaxDb" id="9031-ENSGALP00000017350"/>
<dbReference type="Ensembl" id="ENSGALT00010019749.1">
    <property type="protein sequence ID" value="ENSGALP00010011297.1"/>
    <property type="gene ID" value="ENSGALG00010008257.1"/>
</dbReference>
<dbReference type="GeneID" id="421494"/>
<dbReference type="KEGG" id="gga:421494"/>
<dbReference type="CTD" id="51029"/>
<dbReference type="VEuPathDB" id="HostDB:geneid_421494"/>
<dbReference type="eggNOG" id="KOG0324">
    <property type="taxonomic scope" value="Eukaryota"/>
</dbReference>
<dbReference type="GeneTree" id="ENSGT00730000111005"/>
<dbReference type="HOGENOM" id="CLU_069001_5_1_1"/>
<dbReference type="InParanoid" id="Q5ZIV7"/>
<dbReference type="OrthoDB" id="412286at2759"/>
<dbReference type="PhylomeDB" id="Q5ZIV7"/>
<dbReference type="TreeFam" id="TF313188"/>
<dbReference type="PRO" id="PR:Q5ZIV7"/>
<dbReference type="Proteomes" id="UP000000539">
    <property type="component" value="Chromosome 3"/>
</dbReference>
<dbReference type="Bgee" id="ENSGALG00000010678">
    <property type="expression patterns" value="Expressed in spermatocyte and 12 other cell types or tissues"/>
</dbReference>
<dbReference type="GO" id="GO:0005737">
    <property type="term" value="C:cytoplasm"/>
    <property type="evidence" value="ECO:0000250"/>
    <property type="project" value="UniProtKB"/>
</dbReference>
<dbReference type="GO" id="GO:0004843">
    <property type="term" value="F:cysteine-type deubiquitinase activity"/>
    <property type="evidence" value="ECO:0007669"/>
    <property type="project" value="UniProtKB-EC"/>
</dbReference>
<dbReference type="GO" id="GO:0101005">
    <property type="term" value="F:deubiquitinase activity"/>
    <property type="evidence" value="ECO:0000318"/>
    <property type="project" value="GO_Central"/>
</dbReference>
<dbReference type="GO" id="GO:0052816">
    <property type="term" value="F:long-chain fatty acyl-CoA hydrolase activity"/>
    <property type="evidence" value="ECO:0000250"/>
    <property type="project" value="UniProtKB"/>
</dbReference>
<dbReference type="GO" id="GO:0008474">
    <property type="term" value="F:palmitoyl-(protein) hydrolase activity"/>
    <property type="evidence" value="ECO:0007669"/>
    <property type="project" value="RHEA"/>
</dbReference>
<dbReference type="GO" id="GO:0006508">
    <property type="term" value="P:proteolysis"/>
    <property type="evidence" value="ECO:0007669"/>
    <property type="project" value="UniProtKB-KW"/>
</dbReference>
<dbReference type="FunFam" id="3.90.1720.30:FF:000001">
    <property type="entry name" value="desumoylating isopeptidase 2"/>
    <property type="match status" value="1"/>
</dbReference>
<dbReference type="Gene3D" id="3.90.1720.30">
    <property type="entry name" value="PPPDE domains"/>
    <property type="match status" value="1"/>
</dbReference>
<dbReference type="InterPro" id="IPR008580">
    <property type="entry name" value="PPPDE_dom"/>
</dbReference>
<dbReference type="InterPro" id="IPR042266">
    <property type="entry name" value="PPPDE_sf"/>
</dbReference>
<dbReference type="PANTHER" id="PTHR12378">
    <property type="entry name" value="DESUMOYLATING ISOPEPTIDASE"/>
    <property type="match status" value="1"/>
</dbReference>
<dbReference type="PANTHER" id="PTHR12378:SF6">
    <property type="entry name" value="DEUBIQUITINASE DESI2"/>
    <property type="match status" value="1"/>
</dbReference>
<dbReference type="Pfam" id="PF05903">
    <property type="entry name" value="Peptidase_C97"/>
    <property type="match status" value="1"/>
</dbReference>
<dbReference type="SMART" id="SM01179">
    <property type="entry name" value="DUF862"/>
    <property type="match status" value="1"/>
</dbReference>
<dbReference type="PROSITE" id="PS51858">
    <property type="entry name" value="PPPDE"/>
    <property type="match status" value="1"/>
</dbReference>
<keyword id="KW-0963">Cytoplasm</keyword>
<keyword id="KW-0378">Hydrolase</keyword>
<keyword id="KW-0645">Protease</keyword>
<keyword id="KW-1185">Reference proteome</keyword>
<keyword id="KW-0833">Ubl conjugation pathway</keyword>
<name>DESI2_CHICK</name>
<reference key="1">
    <citation type="journal article" date="2005" name="Genome Biol.">
        <title>Full-length cDNAs from chicken bursal lymphocytes to facilitate gene function analysis.</title>
        <authorList>
            <person name="Caldwell R.B."/>
            <person name="Kierzek A.M."/>
            <person name="Arakawa H."/>
            <person name="Bezzubov Y."/>
            <person name="Zaim J."/>
            <person name="Fiedler P."/>
            <person name="Kutter S."/>
            <person name="Blagodatski A."/>
            <person name="Kostovska D."/>
            <person name="Koter M."/>
            <person name="Plachy J."/>
            <person name="Carninci P."/>
            <person name="Hayashizaki Y."/>
            <person name="Buerstedde J.-M."/>
        </authorList>
    </citation>
    <scope>NUCLEOTIDE SEQUENCE [LARGE SCALE MRNA]</scope>
    <source>
        <strain>CB</strain>
        <tissue>Bursa of Fabricius</tissue>
    </source>
</reference>
<protein>
    <recommendedName>
        <fullName evidence="1">Deubiquitinase DESI2</fullName>
        <ecNumber evidence="1">3.4.19.12</ecNumber>
    </recommendedName>
    <alternativeName>
        <fullName>Desumoylating isopeptidase 2</fullName>
        <shortName>DeSI-2</shortName>
    </alternativeName>
    <alternativeName>
        <fullName>PPPDE peptidase domain-containing protein 1</fullName>
    </alternativeName>
    <alternativeName>
        <fullName>Palmitoyl protein thioesterase DESI2</fullName>
        <ecNumber evidence="1">3.1.2.22</ecNumber>
    </alternativeName>
    <alternativeName>
        <fullName>Protein FAM152A</fullName>
    </alternativeName>
    <alternativeName>
        <fullName>S-depalmitoylase DESI2</fullName>
    </alternativeName>
</protein>
<proteinExistence type="evidence at transcript level"/>
<gene>
    <name type="primary">DESI2</name>
    <name type="synonym">FAM152A</name>
    <name type="synonym">PPPDE1</name>
    <name type="ORF">RCJMB04_23d23</name>
</gene>
<organism>
    <name type="scientific">Gallus gallus</name>
    <name type="common">Chicken</name>
    <dbReference type="NCBI Taxonomy" id="9031"/>
    <lineage>
        <taxon>Eukaryota</taxon>
        <taxon>Metazoa</taxon>
        <taxon>Chordata</taxon>
        <taxon>Craniata</taxon>
        <taxon>Vertebrata</taxon>
        <taxon>Euteleostomi</taxon>
        <taxon>Archelosauria</taxon>
        <taxon>Archosauria</taxon>
        <taxon>Dinosauria</taxon>
        <taxon>Saurischia</taxon>
        <taxon>Theropoda</taxon>
        <taxon>Coelurosauria</taxon>
        <taxon>Aves</taxon>
        <taxon>Neognathae</taxon>
        <taxon>Galloanserae</taxon>
        <taxon>Galliformes</taxon>
        <taxon>Phasianidae</taxon>
        <taxon>Phasianinae</taxon>
        <taxon>Gallus</taxon>
    </lineage>
</organism>
<sequence length="193" mass="21409">MANQLVILNVYDMYWMNEYTSSLGIGVFHSGIEVYGREFAYGGHPYPFSGIFEISPGNASELGETFKFKEAVVLGSTDFMEDDIEKIVEELGKEFKGNAYHLMHKNCNHFSSALSEILCGKEIPRWVNRLAYFSSCIPFLQSCLPKEWLTPAALQSSVSQELQDELEEAEDAAASASLASSASGSRTGRHTKL</sequence>